<dbReference type="EC" id="1.1.1.94" evidence="1"/>
<dbReference type="EMBL" id="CP001001">
    <property type="protein sequence ID" value="ACB23741.1"/>
    <property type="molecule type" value="Genomic_DNA"/>
</dbReference>
<dbReference type="RefSeq" id="WP_012318728.1">
    <property type="nucleotide sequence ID" value="NC_010505.1"/>
</dbReference>
<dbReference type="SMR" id="B1M7L6"/>
<dbReference type="STRING" id="426355.Mrad2831_1746"/>
<dbReference type="GeneID" id="6137775"/>
<dbReference type="KEGG" id="mrd:Mrad2831_1746"/>
<dbReference type="PATRIC" id="fig|426355.14.peg.1793"/>
<dbReference type="eggNOG" id="COG0240">
    <property type="taxonomic scope" value="Bacteria"/>
</dbReference>
<dbReference type="HOGENOM" id="CLU_033449_0_2_5"/>
<dbReference type="OrthoDB" id="9812273at2"/>
<dbReference type="UniPathway" id="UPA00940"/>
<dbReference type="Proteomes" id="UP000006589">
    <property type="component" value="Chromosome"/>
</dbReference>
<dbReference type="GO" id="GO:0005829">
    <property type="term" value="C:cytosol"/>
    <property type="evidence" value="ECO:0007669"/>
    <property type="project" value="TreeGrafter"/>
</dbReference>
<dbReference type="GO" id="GO:0047952">
    <property type="term" value="F:glycerol-3-phosphate dehydrogenase [NAD(P)+] activity"/>
    <property type="evidence" value="ECO:0007669"/>
    <property type="project" value="UniProtKB-UniRule"/>
</dbReference>
<dbReference type="GO" id="GO:0051287">
    <property type="term" value="F:NAD binding"/>
    <property type="evidence" value="ECO:0007669"/>
    <property type="project" value="InterPro"/>
</dbReference>
<dbReference type="GO" id="GO:0005975">
    <property type="term" value="P:carbohydrate metabolic process"/>
    <property type="evidence" value="ECO:0007669"/>
    <property type="project" value="InterPro"/>
</dbReference>
<dbReference type="GO" id="GO:0046167">
    <property type="term" value="P:glycerol-3-phosphate biosynthetic process"/>
    <property type="evidence" value="ECO:0007669"/>
    <property type="project" value="UniProtKB-UniRule"/>
</dbReference>
<dbReference type="GO" id="GO:0046168">
    <property type="term" value="P:glycerol-3-phosphate catabolic process"/>
    <property type="evidence" value="ECO:0007669"/>
    <property type="project" value="InterPro"/>
</dbReference>
<dbReference type="GO" id="GO:0006650">
    <property type="term" value="P:glycerophospholipid metabolic process"/>
    <property type="evidence" value="ECO:0007669"/>
    <property type="project" value="UniProtKB-UniRule"/>
</dbReference>
<dbReference type="GO" id="GO:0008654">
    <property type="term" value="P:phospholipid biosynthetic process"/>
    <property type="evidence" value="ECO:0007669"/>
    <property type="project" value="UniProtKB-KW"/>
</dbReference>
<dbReference type="FunFam" id="3.40.50.720:FF:000019">
    <property type="entry name" value="Glycerol-3-phosphate dehydrogenase [NAD(P)+]"/>
    <property type="match status" value="1"/>
</dbReference>
<dbReference type="Gene3D" id="1.10.1040.10">
    <property type="entry name" value="N-(1-d-carboxylethyl)-l-norvaline Dehydrogenase, domain 2"/>
    <property type="match status" value="1"/>
</dbReference>
<dbReference type="Gene3D" id="3.40.50.720">
    <property type="entry name" value="NAD(P)-binding Rossmann-like Domain"/>
    <property type="match status" value="1"/>
</dbReference>
<dbReference type="HAMAP" id="MF_00394">
    <property type="entry name" value="NAD_Glyc3P_dehydrog"/>
    <property type="match status" value="1"/>
</dbReference>
<dbReference type="InterPro" id="IPR008927">
    <property type="entry name" value="6-PGluconate_DH-like_C_sf"/>
</dbReference>
<dbReference type="InterPro" id="IPR013328">
    <property type="entry name" value="6PGD_dom2"/>
</dbReference>
<dbReference type="InterPro" id="IPR006168">
    <property type="entry name" value="G3P_DH_NAD-dep"/>
</dbReference>
<dbReference type="InterPro" id="IPR006109">
    <property type="entry name" value="G3P_DH_NAD-dep_C"/>
</dbReference>
<dbReference type="InterPro" id="IPR011128">
    <property type="entry name" value="G3P_DH_NAD-dep_N"/>
</dbReference>
<dbReference type="InterPro" id="IPR036291">
    <property type="entry name" value="NAD(P)-bd_dom_sf"/>
</dbReference>
<dbReference type="NCBIfam" id="NF000940">
    <property type="entry name" value="PRK00094.1-2"/>
    <property type="match status" value="1"/>
</dbReference>
<dbReference type="NCBIfam" id="NF000942">
    <property type="entry name" value="PRK00094.1-4"/>
    <property type="match status" value="1"/>
</dbReference>
<dbReference type="PANTHER" id="PTHR11728">
    <property type="entry name" value="GLYCEROL-3-PHOSPHATE DEHYDROGENASE"/>
    <property type="match status" value="1"/>
</dbReference>
<dbReference type="PANTHER" id="PTHR11728:SF1">
    <property type="entry name" value="GLYCEROL-3-PHOSPHATE DEHYDROGENASE [NAD(+)] 2, CHLOROPLASTIC"/>
    <property type="match status" value="1"/>
</dbReference>
<dbReference type="Pfam" id="PF07479">
    <property type="entry name" value="NAD_Gly3P_dh_C"/>
    <property type="match status" value="1"/>
</dbReference>
<dbReference type="Pfam" id="PF01210">
    <property type="entry name" value="NAD_Gly3P_dh_N"/>
    <property type="match status" value="1"/>
</dbReference>
<dbReference type="PIRSF" id="PIRSF000114">
    <property type="entry name" value="Glycerol-3-P_dh"/>
    <property type="match status" value="1"/>
</dbReference>
<dbReference type="PRINTS" id="PR00077">
    <property type="entry name" value="GPDHDRGNASE"/>
</dbReference>
<dbReference type="SUPFAM" id="SSF48179">
    <property type="entry name" value="6-phosphogluconate dehydrogenase C-terminal domain-like"/>
    <property type="match status" value="1"/>
</dbReference>
<dbReference type="SUPFAM" id="SSF51735">
    <property type="entry name" value="NAD(P)-binding Rossmann-fold domains"/>
    <property type="match status" value="1"/>
</dbReference>
<proteinExistence type="inferred from homology"/>
<reference key="1">
    <citation type="submission" date="2008-03" db="EMBL/GenBank/DDBJ databases">
        <title>Complete sequence of chromosome of Methylobacterium radiotolerans JCM 2831.</title>
        <authorList>
            <consortium name="US DOE Joint Genome Institute"/>
            <person name="Copeland A."/>
            <person name="Lucas S."/>
            <person name="Lapidus A."/>
            <person name="Glavina del Rio T."/>
            <person name="Dalin E."/>
            <person name="Tice H."/>
            <person name="Bruce D."/>
            <person name="Goodwin L."/>
            <person name="Pitluck S."/>
            <person name="Kiss H."/>
            <person name="Brettin T."/>
            <person name="Detter J.C."/>
            <person name="Han C."/>
            <person name="Kuske C.R."/>
            <person name="Schmutz J."/>
            <person name="Larimer F."/>
            <person name="Land M."/>
            <person name="Hauser L."/>
            <person name="Kyrpides N."/>
            <person name="Mikhailova N."/>
            <person name="Marx C.J."/>
            <person name="Richardson P."/>
        </authorList>
    </citation>
    <scope>NUCLEOTIDE SEQUENCE [LARGE SCALE GENOMIC DNA]</scope>
    <source>
        <strain>ATCC 27329 / DSM 1819 / JCM 2831 / NBRC 15690 / NCIMB 10815 / 0-1</strain>
    </source>
</reference>
<comment type="function">
    <text evidence="1">Catalyzes the reduction of the glycolytic intermediate dihydroxyacetone phosphate (DHAP) to sn-glycerol 3-phosphate (G3P), the key precursor for phospholipid synthesis.</text>
</comment>
<comment type="catalytic activity">
    <reaction evidence="1">
        <text>sn-glycerol 3-phosphate + NAD(+) = dihydroxyacetone phosphate + NADH + H(+)</text>
        <dbReference type="Rhea" id="RHEA:11092"/>
        <dbReference type="ChEBI" id="CHEBI:15378"/>
        <dbReference type="ChEBI" id="CHEBI:57540"/>
        <dbReference type="ChEBI" id="CHEBI:57597"/>
        <dbReference type="ChEBI" id="CHEBI:57642"/>
        <dbReference type="ChEBI" id="CHEBI:57945"/>
        <dbReference type="EC" id="1.1.1.94"/>
    </reaction>
    <physiologicalReaction direction="right-to-left" evidence="1">
        <dbReference type="Rhea" id="RHEA:11094"/>
    </physiologicalReaction>
</comment>
<comment type="catalytic activity">
    <reaction evidence="1">
        <text>sn-glycerol 3-phosphate + NADP(+) = dihydroxyacetone phosphate + NADPH + H(+)</text>
        <dbReference type="Rhea" id="RHEA:11096"/>
        <dbReference type="ChEBI" id="CHEBI:15378"/>
        <dbReference type="ChEBI" id="CHEBI:57597"/>
        <dbReference type="ChEBI" id="CHEBI:57642"/>
        <dbReference type="ChEBI" id="CHEBI:57783"/>
        <dbReference type="ChEBI" id="CHEBI:58349"/>
        <dbReference type="EC" id="1.1.1.94"/>
    </reaction>
    <physiologicalReaction direction="right-to-left" evidence="1">
        <dbReference type="Rhea" id="RHEA:11098"/>
    </physiologicalReaction>
</comment>
<comment type="pathway">
    <text evidence="1">Membrane lipid metabolism; glycerophospholipid metabolism.</text>
</comment>
<comment type="subcellular location">
    <subcellularLocation>
        <location evidence="1">Cytoplasm</location>
    </subcellularLocation>
</comment>
<comment type="similarity">
    <text evidence="1">Belongs to the NAD-dependent glycerol-3-phosphate dehydrogenase family.</text>
</comment>
<organism>
    <name type="scientific">Methylobacterium radiotolerans (strain ATCC 27329 / DSM 1819 / JCM 2831 / NBRC 15690 / NCIMB 10815 / 0-1)</name>
    <dbReference type="NCBI Taxonomy" id="426355"/>
    <lineage>
        <taxon>Bacteria</taxon>
        <taxon>Pseudomonadati</taxon>
        <taxon>Pseudomonadota</taxon>
        <taxon>Alphaproteobacteria</taxon>
        <taxon>Hyphomicrobiales</taxon>
        <taxon>Methylobacteriaceae</taxon>
        <taxon>Methylobacterium</taxon>
    </lineage>
</organism>
<name>GPDA_METRJ</name>
<protein>
    <recommendedName>
        <fullName evidence="1">Glycerol-3-phosphate dehydrogenase [NAD(P)+]</fullName>
        <ecNumber evidence="1">1.1.1.94</ecNumber>
    </recommendedName>
    <alternativeName>
        <fullName evidence="1">NAD(P)(+)-dependent glycerol-3-phosphate dehydrogenase</fullName>
    </alternativeName>
    <alternativeName>
        <fullName evidence="1">NAD(P)H-dependent dihydroxyacetone-phosphate reductase</fullName>
    </alternativeName>
</protein>
<gene>
    <name evidence="1" type="primary">gpsA</name>
    <name type="ordered locus">Mrad2831_1746</name>
</gene>
<sequence length="332" mass="32697">MSAETPINVVGGGAWGTALANAAAGAGHPVTLWLRDAGAAAALQAQRENPRYLPGVPLHPAIRATGEAVDLAGARATLLVVPAQTVRGVLESLRGPLATAGPVILCAKGIERGSDSFMSAVAEQVLPSGTPVAVLSGPSFAIDVARGLPTAVTLAAADAGRAAALSALLSGPSFRLYHTDDVRGVEIGGAGKNVLAIACGIVAGRGLGESARAALIARAFAELMRFARPFGGRPETLMGLSGLGDLVLTASSPQSRNFAFGQRLGAGASPAEAAGGKLAEGAFTAAALAGLAAAKGIEMPVAAAVAAIVAGTASVDDVIAGLLARPLRGETD</sequence>
<keyword id="KW-0963">Cytoplasm</keyword>
<keyword id="KW-0444">Lipid biosynthesis</keyword>
<keyword id="KW-0443">Lipid metabolism</keyword>
<keyword id="KW-0520">NAD</keyword>
<keyword id="KW-0521">NADP</keyword>
<keyword id="KW-0547">Nucleotide-binding</keyword>
<keyword id="KW-0560">Oxidoreductase</keyword>
<keyword id="KW-0594">Phospholipid biosynthesis</keyword>
<keyword id="KW-1208">Phospholipid metabolism</keyword>
<evidence type="ECO:0000255" key="1">
    <source>
        <dbReference type="HAMAP-Rule" id="MF_00394"/>
    </source>
</evidence>
<feature type="chain" id="PRO_1000123165" description="Glycerol-3-phosphate dehydrogenase [NAD(P)+]">
    <location>
        <begin position="1"/>
        <end position="332"/>
    </location>
</feature>
<feature type="active site" description="Proton acceptor" evidence="1">
    <location>
        <position position="192"/>
    </location>
</feature>
<feature type="binding site" evidence="1">
    <location>
        <position position="15"/>
    </location>
    <ligand>
        <name>NADPH</name>
        <dbReference type="ChEBI" id="CHEBI:57783"/>
    </ligand>
</feature>
<feature type="binding site" evidence="1">
    <location>
        <position position="35"/>
    </location>
    <ligand>
        <name>NADPH</name>
        <dbReference type="ChEBI" id="CHEBI:57783"/>
    </ligand>
</feature>
<feature type="binding site" evidence="1">
    <location>
        <position position="108"/>
    </location>
    <ligand>
        <name>NADPH</name>
        <dbReference type="ChEBI" id="CHEBI:57783"/>
    </ligand>
</feature>
<feature type="binding site" evidence="1">
    <location>
        <position position="108"/>
    </location>
    <ligand>
        <name>sn-glycerol 3-phosphate</name>
        <dbReference type="ChEBI" id="CHEBI:57597"/>
    </ligand>
</feature>
<feature type="binding site" evidence="1">
    <location>
        <position position="137"/>
    </location>
    <ligand>
        <name>sn-glycerol 3-phosphate</name>
        <dbReference type="ChEBI" id="CHEBI:57597"/>
    </ligand>
</feature>
<feature type="binding site" evidence="1">
    <location>
        <position position="139"/>
    </location>
    <ligand>
        <name>sn-glycerol 3-phosphate</name>
        <dbReference type="ChEBI" id="CHEBI:57597"/>
    </ligand>
</feature>
<feature type="binding site" evidence="1">
    <location>
        <position position="141"/>
    </location>
    <ligand>
        <name>NADPH</name>
        <dbReference type="ChEBI" id="CHEBI:57783"/>
    </ligand>
</feature>
<feature type="binding site" evidence="1">
    <location>
        <position position="192"/>
    </location>
    <ligand>
        <name>sn-glycerol 3-phosphate</name>
        <dbReference type="ChEBI" id="CHEBI:57597"/>
    </ligand>
</feature>
<feature type="binding site" evidence="1">
    <location>
        <position position="245"/>
    </location>
    <ligand>
        <name>sn-glycerol 3-phosphate</name>
        <dbReference type="ChEBI" id="CHEBI:57597"/>
    </ligand>
</feature>
<feature type="binding site" evidence="1">
    <location>
        <position position="255"/>
    </location>
    <ligand>
        <name>sn-glycerol 3-phosphate</name>
        <dbReference type="ChEBI" id="CHEBI:57597"/>
    </ligand>
</feature>
<feature type="binding site" evidence="1">
    <location>
        <position position="256"/>
    </location>
    <ligand>
        <name>NADPH</name>
        <dbReference type="ChEBI" id="CHEBI:57783"/>
    </ligand>
</feature>
<feature type="binding site" evidence="1">
    <location>
        <position position="256"/>
    </location>
    <ligand>
        <name>sn-glycerol 3-phosphate</name>
        <dbReference type="ChEBI" id="CHEBI:57597"/>
    </ligand>
</feature>
<feature type="binding site" evidence="1">
    <location>
        <position position="257"/>
    </location>
    <ligand>
        <name>sn-glycerol 3-phosphate</name>
        <dbReference type="ChEBI" id="CHEBI:57597"/>
    </ligand>
</feature>
<feature type="binding site" evidence="1">
    <location>
        <position position="278"/>
    </location>
    <ligand>
        <name>NADPH</name>
        <dbReference type="ChEBI" id="CHEBI:57783"/>
    </ligand>
</feature>
<feature type="binding site" evidence="1">
    <location>
        <position position="280"/>
    </location>
    <ligand>
        <name>NADPH</name>
        <dbReference type="ChEBI" id="CHEBI:57783"/>
    </ligand>
</feature>
<accession>B1M7L6</accession>